<organism>
    <name type="scientific">Mycoplasma mycoides</name>
    <dbReference type="NCBI Taxonomy" id="2102"/>
    <lineage>
        <taxon>Bacteria</taxon>
        <taxon>Bacillati</taxon>
        <taxon>Mycoplasmatota</taxon>
        <taxon>Mollicutes</taxon>
        <taxon>Mycoplasmataceae</taxon>
        <taxon>Mycoplasma</taxon>
    </lineage>
</organism>
<reference key="1">
    <citation type="journal article" date="1997" name="Biochem. Biophys. Res. Commun.">
        <title>A 13-kDa protein with a helix-turn-helix motif is encoded by bacterial operons related to the SRP pathway.</title>
        <authorList>
            <person name="Samuelsson T."/>
            <person name="Macao B."/>
            <person name="Boelske G."/>
        </authorList>
    </citation>
    <scope>NUCLEOTIDE SEQUENCE [GENOMIC DNA]</scope>
</reference>
<proteinExistence type="inferred from homology"/>
<evidence type="ECO:0000250" key="1"/>
<evidence type="ECO:0000305" key="2"/>
<sequence>MKLKNNLLEKTLELSELFKIYKELLTDKQKQYFELYIDEDLSLSEIADEFNISKTAVYDSISKTSKLLFSLETKLHLKQKQDLLISLINKIETNQIDEKQFIKSLKEVIWWKY</sequence>
<dbReference type="EMBL" id="Y10137">
    <property type="protein sequence ID" value="CAA71225.1"/>
    <property type="molecule type" value="Genomic_DNA"/>
</dbReference>
<dbReference type="PIR" id="JC5411">
    <property type="entry name" value="JC5411"/>
</dbReference>
<dbReference type="RefSeq" id="WP_013729594.1">
    <property type="nucleotide sequence ID" value="NZ_JAUYZC010000001.1"/>
</dbReference>
<dbReference type="SMR" id="O05290"/>
<dbReference type="GeneID" id="93426362"/>
<dbReference type="Gene3D" id="1.10.10.10">
    <property type="entry name" value="Winged helix-like DNA-binding domain superfamily/Winged helix DNA-binding domain"/>
    <property type="match status" value="1"/>
</dbReference>
<dbReference type="HAMAP" id="MF_00245">
    <property type="entry name" value="UPF0122"/>
    <property type="match status" value="1"/>
</dbReference>
<dbReference type="InterPro" id="IPR013324">
    <property type="entry name" value="RNA_pol_sigma_r3/r4-like"/>
</dbReference>
<dbReference type="InterPro" id="IPR007394">
    <property type="entry name" value="UPF0122"/>
</dbReference>
<dbReference type="InterPro" id="IPR054831">
    <property type="entry name" value="UPF0122_fam_protein"/>
</dbReference>
<dbReference type="InterPro" id="IPR036388">
    <property type="entry name" value="WH-like_DNA-bd_sf"/>
</dbReference>
<dbReference type="NCBIfam" id="NF001075">
    <property type="entry name" value="PRK00118.2-6"/>
    <property type="match status" value="1"/>
</dbReference>
<dbReference type="NCBIfam" id="NF045758">
    <property type="entry name" value="YlxM"/>
    <property type="match status" value="1"/>
</dbReference>
<dbReference type="PANTHER" id="PTHR40083">
    <property type="entry name" value="UPF0122 PROTEIN CBO2450/CLC_2298"/>
    <property type="match status" value="1"/>
</dbReference>
<dbReference type="PANTHER" id="PTHR40083:SF1">
    <property type="entry name" value="UPF0122 PROTEIN YLXM"/>
    <property type="match status" value="1"/>
</dbReference>
<dbReference type="Pfam" id="PF04297">
    <property type="entry name" value="UPF0122"/>
    <property type="match status" value="1"/>
</dbReference>
<dbReference type="SUPFAM" id="SSF88659">
    <property type="entry name" value="Sigma3 and sigma4 domains of RNA polymerase sigma factors"/>
    <property type="match status" value="1"/>
</dbReference>
<name>P13_MYCMY</name>
<protein>
    <recommendedName>
        <fullName>Probable UPF0122 protein</fullName>
    </recommendedName>
    <alternativeName>
        <fullName>p13</fullName>
    </alternativeName>
</protein>
<accession>O05290</accession>
<comment type="function">
    <text evidence="1">Might take part in the signal recognition particle (SRP) pathway. This is inferred from the conservation of its genetic proximity to ftsY/ffh. May be a regulatory protein (By similarity).</text>
</comment>
<comment type="similarity">
    <text evidence="2">Belongs to the UPF0122 family.</text>
</comment>
<feature type="chain" id="PRO_0000211872" description="Probable UPF0122 protein">
    <location>
        <begin position="1"/>
        <end position="113"/>
    </location>
</feature>